<organism>
    <name type="scientific">Pseudomonas fluorescens (strain ATCC BAA-477 / NRRL B-23932 / Pf-5)</name>
    <dbReference type="NCBI Taxonomy" id="220664"/>
    <lineage>
        <taxon>Bacteria</taxon>
        <taxon>Pseudomonadati</taxon>
        <taxon>Pseudomonadota</taxon>
        <taxon>Gammaproteobacteria</taxon>
        <taxon>Pseudomonadales</taxon>
        <taxon>Pseudomonadaceae</taxon>
        <taxon>Pseudomonas</taxon>
    </lineage>
</organism>
<proteinExistence type="inferred from homology"/>
<feature type="chain" id="PRO_1000013047" description="UPF0149 protein PFL_5969">
    <location>
        <begin position="1"/>
        <end position="185"/>
    </location>
</feature>
<dbReference type="EMBL" id="CP000076">
    <property type="protein sequence ID" value="AAY95159.1"/>
    <property type="molecule type" value="Genomic_DNA"/>
</dbReference>
<dbReference type="RefSeq" id="WP_011064143.1">
    <property type="nucleotide sequence ID" value="NC_004129.6"/>
</dbReference>
<dbReference type="SMR" id="Q4K406"/>
<dbReference type="STRING" id="220664.PFL_5969"/>
<dbReference type="KEGG" id="pfl:PFL_5969"/>
<dbReference type="PATRIC" id="fig|220664.5.peg.6086"/>
<dbReference type="eggNOG" id="COG3079">
    <property type="taxonomic scope" value="Bacteria"/>
</dbReference>
<dbReference type="HOGENOM" id="CLU_085336_0_0_6"/>
<dbReference type="Proteomes" id="UP000008540">
    <property type="component" value="Chromosome"/>
</dbReference>
<dbReference type="GO" id="GO:0005829">
    <property type="term" value="C:cytosol"/>
    <property type="evidence" value="ECO:0007669"/>
    <property type="project" value="TreeGrafter"/>
</dbReference>
<dbReference type="Gene3D" id="1.20.120.740">
    <property type="entry name" value="YgfB uncharacterised protein family UPF0149, PF03695"/>
    <property type="match status" value="1"/>
</dbReference>
<dbReference type="HAMAP" id="MF_00346">
    <property type="entry name" value="UPF0149"/>
    <property type="match status" value="1"/>
</dbReference>
<dbReference type="InterPro" id="IPR011978">
    <property type="entry name" value="YgfB-like"/>
</dbReference>
<dbReference type="InterPro" id="IPR036255">
    <property type="entry name" value="YgfB-like_sf"/>
</dbReference>
<dbReference type="NCBIfam" id="NF002562">
    <property type="entry name" value="PRK02166.1"/>
    <property type="match status" value="1"/>
</dbReference>
<dbReference type="PANTHER" id="PTHR37528">
    <property type="entry name" value="UPF0149 PROTEIN YGFB"/>
    <property type="match status" value="1"/>
</dbReference>
<dbReference type="PANTHER" id="PTHR37528:SF1">
    <property type="entry name" value="UPF0149 PROTEIN YGFB"/>
    <property type="match status" value="1"/>
</dbReference>
<dbReference type="Pfam" id="PF03695">
    <property type="entry name" value="UPF0149"/>
    <property type="match status" value="1"/>
</dbReference>
<dbReference type="SUPFAM" id="SSF101327">
    <property type="entry name" value="YgfB-like"/>
    <property type="match status" value="1"/>
</dbReference>
<protein>
    <recommendedName>
        <fullName evidence="1">UPF0149 protein PFL_5969</fullName>
    </recommendedName>
</protein>
<accession>Q4K406</accession>
<name>Y5969_PSEF5</name>
<sequence length="185" mass="19586">MPIQNSPYNAFATLLSSSGHPVSPAELHGLLLGRSCAGAGFEVDGWLVDAAELLEGEPQDNVRSALIGLQEMVKGELTSDDMTVVLLLPSDDAPLAERAAALGQWCQGFLAGFGLNSRDSSALSVEATEVLQDLAAIAQVQDALEESDDGESDYMEVMEYLRVAPLLLFTETNKTVAPAAKPSLH</sequence>
<comment type="similarity">
    <text evidence="1">Belongs to the UPF0149 family.</text>
</comment>
<gene>
    <name type="ordered locus">PFL_5969</name>
</gene>
<evidence type="ECO:0000255" key="1">
    <source>
        <dbReference type="HAMAP-Rule" id="MF_00346"/>
    </source>
</evidence>
<reference key="1">
    <citation type="journal article" date="2005" name="Nat. Biotechnol.">
        <title>Complete genome sequence of the plant commensal Pseudomonas fluorescens Pf-5.</title>
        <authorList>
            <person name="Paulsen I.T."/>
            <person name="Press C.M."/>
            <person name="Ravel J."/>
            <person name="Kobayashi D.Y."/>
            <person name="Myers G.S.A."/>
            <person name="Mavrodi D.V."/>
            <person name="DeBoy R.T."/>
            <person name="Seshadri R."/>
            <person name="Ren Q."/>
            <person name="Madupu R."/>
            <person name="Dodson R.J."/>
            <person name="Durkin A.S."/>
            <person name="Brinkac L.M."/>
            <person name="Daugherty S.C."/>
            <person name="Sullivan S.A."/>
            <person name="Rosovitz M.J."/>
            <person name="Gwinn M.L."/>
            <person name="Zhou L."/>
            <person name="Schneider D.J."/>
            <person name="Cartinhour S.W."/>
            <person name="Nelson W.C."/>
            <person name="Weidman J."/>
            <person name="Watkins K."/>
            <person name="Tran K."/>
            <person name="Khouri H."/>
            <person name="Pierson E.A."/>
            <person name="Pierson L.S. III"/>
            <person name="Thomashow L.S."/>
            <person name="Loper J.E."/>
        </authorList>
    </citation>
    <scope>NUCLEOTIDE SEQUENCE [LARGE SCALE GENOMIC DNA]</scope>
    <source>
        <strain>ATCC BAA-477 / NRRL B-23932 / Pf-5</strain>
    </source>
</reference>